<protein>
    <recommendedName>
        <fullName evidence="6">Amidase FVEG_08295</fullName>
        <ecNumber evidence="8">3.5.1.4</ecNumber>
    </recommendedName>
    <alternativeName>
        <fullName evidence="6">Fusarium detoxification of benzoxazolinone cluster 1 protein FVEG_08295</fullName>
        <shortName evidence="6">FDB1 cluster protein FVEG_08295</shortName>
    </alternativeName>
</protein>
<evidence type="ECO:0000250" key="1">
    <source>
        <dbReference type="UniProtKB" id="P97612"/>
    </source>
</evidence>
<evidence type="ECO:0000269" key="2">
    <source>
    </source>
</evidence>
<evidence type="ECO:0000269" key="3">
    <source>
    </source>
</evidence>
<evidence type="ECO:0000269" key="4">
    <source>
    </source>
</evidence>
<evidence type="ECO:0000269" key="5">
    <source>
    </source>
</evidence>
<evidence type="ECO:0000303" key="6">
    <source>
    </source>
</evidence>
<evidence type="ECO:0000305" key="7"/>
<evidence type="ECO:0000305" key="8">
    <source>
    </source>
</evidence>
<sequence>MAEVNWQQLINQKRATREALIPEQWLLPATITSKVTPQSTASAFELLSEAGLLTEREIDITEKYTAVSLTAKIATGELSSYDVATAFCKRAAIVHQLTNSLTEIFFDKALERARWLDEYLSKEGKTVGPLHGLPITLKDMIHVKGQYSTMGFVGHLRHPPADENAVITDMLEAAGAVFYCKTNVPQTLFVCESFNNVFGRTLNPYKLCLSPGGSSSGEAAQLGLCGSIMGVGSDIAGSVRVPAIFTGVYGFRPTVNRLPWSKQAELALKGWQGVQPTLGPMARTAQDLTLFMKTIIQAEPWRYDSTALAIPWHDAPRKDKLTIGVWSQDPQFPVFPPIARTMASAVGRLRAAGHTIKIIEAPPTMKAMKIAMRWFALDQVNLPLKFVQDGAESPIADLDAMDPGKFLDPGYVADLSENISISADIHDYREEWAKIWREAGIDVLLCPASRGSAVPHGEFGPLMYTIPWNLLDFPSSVVPFGKADKTLDSKDGYDSTVVDGAPTGFQLVGWRFQDEQTLMATEVIADTLKA</sequence>
<proteinExistence type="evidence at transcript level"/>
<accession>W7MLD8</accession>
<dbReference type="EC" id="3.5.1.4" evidence="8"/>
<dbReference type="EMBL" id="CM000587">
    <property type="protein sequence ID" value="EWG48584.1"/>
    <property type="molecule type" value="Genomic_DNA"/>
</dbReference>
<dbReference type="RefSeq" id="XP_018754775.1">
    <property type="nucleotide sequence ID" value="XM_018897188.1"/>
</dbReference>
<dbReference type="SMR" id="W7MLD8"/>
<dbReference type="STRING" id="334819.W7MLD8"/>
<dbReference type="GeneID" id="30066037"/>
<dbReference type="KEGG" id="fvr:FVEG_08295"/>
<dbReference type="VEuPathDB" id="FungiDB:FVEG_08295"/>
<dbReference type="eggNOG" id="KOG1212">
    <property type="taxonomic scope" value="Eukaryota"/>
</dbReference>
<dbReference type="OrthoDB" id="54832at110618"/>
<dbReference type="Proteomes" id="UP000009096">
    <property type="component" value="Chromosome 10"/>
</dbReference>
<dbReference type="GO" id="GO:0004040">
    <property type="term" value="F:amidase activity"/>
    <property type="evidence" value="ECO:0007669"/>
    <property type="project" value="UniProtKB-EC"/>
</dbReference>
<dbReference type="Gene3D" id="3.90.1300.10">
    <property type="entry name" value="Amidase signature (AS) domain"/>
    <property type="match status" value="1"/>
</dbReference>
<dbReference type="InterPro" id="IPR020556">
    <property type="entry name" value="Amidase_CS"/>
</dbReference>
<dbReference type="InterPro" id="IPR023631">
    <property type="entry name" value="Amidase_dom"/>
</dbReference>
<dbReference type="InterPro" id="IPR036928">
    <property type="entry name" value="AS_sf"/>
</dbReference>
<dbReference type="PANTHER" id="PTHR46072">
    <property type="entry name" value="AMIDASE-RELATED-RELATED"/>
    <property type="match status" value="1"/>
</dbReference>
<dbReference type="PANTHER" id="PTHR46072:SF5">
    <property type="entry name" value="GENERAL AMIDASE-C"/>
    <property type="match status" value="1"/>
</dbReference>
<dbReference type="Pfam" id="PF01425">
    <property type="entry name" value="Amidase"/>
    <property type="match status" value="1"/>
</dbReference>
<dbReference type="PIRSF" id="PIRSF001221">
    <property type="entry name" value="Amidase_fungi"/>
    <property type="match status" value="1"/>
</dbReference>
<dbReference type="SUPFAM" id="SSF75304">
    <property type="entry name" value="Amidase signature (AS) enzymes"/>
    <property type="match status" value="1"/>
</dbReference>
<dbReference type="PROSITE" id="PS00571">
    <property type="entry name" value="AMIDASES"/>
    <property type="match status" value="1"/>
</dbReference>
<organism>
    <name type="scientific">Gibberella moniliformis (strain M3125 / FGSC 7600)</name>
    <name type="common">Maize ear and stalk rot fungus</name>
    <name type="synonym">Fusarium verticillioides</name>
    <dbReference type="NCBI Taxonomy" id="334819"/>
    <lineage>
        <taxon>Eukaryota</taxon>
        <taxon>Fungi</taxon>
        <taxon>Dikarya</taxon>
        <taxon>Ascomycota</taxon>
        <taxon>Pezizomycotina</taxon>
        <taxon>Sordariomycetes</taxon>
        <taxon>Hypocreomycetidae</taxon>
        <taxon>Hypocreales</taxon>
        <taxon>Nectriaceae</taxon>
        <taxon>Fusarium</taxon>
        <taxon>Fusarium fujikuroi species complex</taxon>
    </lineage>
</organism>
<name>FDB95_GIBM7</name>
<comment type="function">
    <text evidence="2 3 4 5 8">Amidase; part of the Fusarium detoxification of benzoxazolinone cluster 1 (FDB1) involved in the degradation of benzoxazolinones produced by the host plant (PubMed:19302487, PubMed:26808652). Maize, wheat, and rye produce the 2 benzoxazinone phytoanticipins 2,4-dihy-droxy-7-methoxy-1,4-benzoxazin-3-one (DIMBOA) and 2,4-dihydroxy-1,4-benzoxazin-3-one (DIBOA) that, due to their inherent instability once released, spontaneously degrade to the more stable corresponding benzoxazolinones, 6-methoxy-2-benzoxazolinone (MBOA) and 2-benzoxazolinone (BOA), respectively (PubMed:11876429). The first step in the detoxification of benzoxazolinones involves the hydrolysis of the cyclic ester bond of benzoxazolinones by the FDB1 cluster gamma-lactamase MBL1 to aminophenols (PubMed:12788712, PubMed:26808652). MBL1 is able to convert BOA into 2-aminophenol (2-AP), as well as MBOA into 5-methoxy-2-aminophenol (2-AMP) (PubMed:12788712, PubMed:26808652). The FDB2 cluster N-malonyltransferase FDB2/NAT1 then metabolizes aminophenols via N-malonylation to non-toxic malonamic acids (PubMed:12788712, PubMed:19302487). FDB2/NAT1 converts 2-AP into N-(2-hydroxyphenyl) malonamic acid (HPMA) and 2-AMP into N-(2-hydroxy-4-methoxyphenyl) malonamic acid (HMPMA) (PubMed:12788712, PubMed:19302487). The duplicated dienlactone hydrolases DLH1 and DLH2 may provide redundant function for hydrolyzing the lactone moiety in the BOA molecule (Probable). The roles of the amidases an other enzymes encoded by the 2 FDB clusters have not been identified so far (Probable).</text>
</comment>
<comment type="catalytic activity">
    <reaction evidence="8">
        <text>a monocarboxylic acid amide + H2O = a monocarboxylate + NH4(+)</text>
        <dbReference type="Rhea" id="RHEA:12020"/>
        <dbReference type="ChEBI" id="CHEBI:15377"/>
        <dbReference type="ChEBI" id="CHEBI:28938"/>
        <dbReference type="ChEBI" id="CHEBI:35757"/>
        <dbReference type="ChEBI" id="CHEBI:83628"/>
        <dbReference type="EC" id="3.5.1.4"/>
    </reaction>
</comment>
<comment type="pathway">
    <text evidence="8">Xenobiotic degradation.</text>
</comment>
<comment type="induction">
    <text evidence="5">Expression is induced in response to 2-benzoxasolinone (BOA) exposure.</text>
</comment>
<comment type="disruption phenotype">
    <text evidence="5">Does not affect BOA degradation.</text>
</comment>
<comment type="miscellaneous">
    <text evidence="8">Fusarium verticillioides possesses 2 unlinked loci, FDB1 and FDB2, necessary for detoxification of antimicrobial compounds produced by maize, including 2-benzoxazolinone (BOA) (Probable). The FDB2 cluster arose as a duplication of the FDB1 cluster with rearrangement and expansion by incorporating additional genes (Probable).</text>
</comment>
<comment type="similarity">
    <text evidence="7">Belongs to the amidase family.</text>
</comment>
<feature type="chain" id="PRO_0000454599" description="Amidase FVEG_08295">
    <location>
        <begin position="1"/>
        <end position="530"/>
    </location>
</feature>
<feature type="active site" description="Charge relay system" evidence="1">
    <location>
        <position position="138"/>
    </location>
</feature>
<feature type="active site" description="Charge relay system" evidence="1">
    <location>
        <position position="214"/>
    </location>
</feature>
<feature type="active site" description="Acyl-ester intermediate" evidence="1">
    <location>
        <position position="238"/>
    </location>
</feature>
<feature type="binding site" evidence="1">
    <location>
        <position position="214"/>
    </location>
    <ligand>
        <name>substrate</name>
    </ligand>
</feature>
<feature type="binding site" evidence="1">
    <location>
        <begin position="235"/>
        <end position="238"/>
    </location>
    <ligand>
        <name>substrate</name>
    </ligand>
</feature>
<gene>
    <name type="ORF">FVEG_08295</name>
</gene>
<keyword id="KW-0378">Hydrolase</keyword>
<keyword id="KW-1185">Reference proteome</keyword>
<reference key="1">
    <citation type="journal article" date="2010" name="Nature">
        <title>Comparative genomics reveals mobile pathogenicity chromosomes in Fusarium.</title>
        <authorList>
            <person name="Ma L.-J."/>
            <person name="van der Does H.C."/>
            <person name="Borkovich K.A."/>
            <person name="Coleman J.J."/>
            <person name="Daboussi M.-J."/>
            <person name="Di Pietro A."/>
            <person name="Dufresne M."/>
            <person name="Freitag M."/>
            <person name="Grabherr M."/>
            <person name="Henrissat B."/>
            <person name="Houterman P.M."/>
            <person name="Kang S."/>
            <person name="Shim W.-B."/>
            <person name="Woloshuk C."/>
            <person name="Xie X."/>
            <person name="Xu J.-R."/>
            <person name="Antoniw J."/>
            <person name="Baker S.E."/>
            <person name="Bluhm B.H."/>
            <person name="Breakspear A."/>
            <person name="Brown D.W."/>
            <person name="Butchko R.A.E."/>
            <person name="Chapman S."/>
            <person name="Coulson R."/>
            <person name="Coutinho P.M."/>
            <person name="Danchin E.G.J."/>
            <person name="Diener A."/>
            <person name="Gale L.R."/>
            <person name="Gardiner D.M."/>
            <person name="Goff S."/>
            <person name="Hammond-Kosack K.E."/>
            <person name="Hilburn K."/>
            <person name="Hua-Van A."/>
            <person name="Jonkers W."/>
            <person name="Kazan K."/>
            <person name="Kodira C.D."/>
            <person name="Koehrsen M."/>
            <person name="Kumar L."/>
            <person name="Lee Y.-H."/>
            <person name="Li L."/>
            <person name="Manners J.M."/>
            <person name="Miranda-Saavedra D."/>
            <person name="Mukherjee M."/>
            <person name="Park G."/>
            <person name="Park J."/>
            <person name="Park S.-Y."/>
            <person name="Proctor R.H."/>
            <person name="Regev A."/>
            <person name="Ruiz-Roldan M.C."/>
            <person name="Sain D."/>
            <person name="Sakthikumar S."/>
            <person name="Sykes S."/>
            <person name="Schwartz D.C."/>
            <person name="Turgeon B.G."/>
            <person name="Wapinski I."/>
            <person name="Yoder O."/>
            <person name="Young S."/>
            <person name="Zeng Q."/>
            <person name="Zhou S."/>
            <person name="Galagan J."/>
            <person name="Cuomo C.A."/>
            <person name="Kistler H.C."/>
            <person name="Rep M."/>
        </authorList>
    </citation>
    <scope>NUCLEOTIDE SEQUENCE [LARGE SCALE GENOMIC DNA]</scope>
    <source>
        <strain>M3125 / FGSC 7600</strain>
    </source>
</reference>
<reference key="2">
    <citation type="journal article" date="2002" name="Mol. Plant Microbe Interact.">
        <title>Fdb1 and Fdb2, Fusarium verticillioides loci necessary for detoxification of preformed antimicrobials from corn.</title>
        <authorList>
            <person name="Glenn A.E."/>
            <person name="Gold S.E."/>
            <person name="Bacon C.W."/>
        </authorList>
    </citation>
    <scope>FUNCTION</scope>
</reference>
<reference key="3">
    <citation type="journal article" date="2003" name="Appl. Environ. Microbiol.">
        <title>Identification of intermediate and branch metabolites resulting from biotransformation of 2-benzoxazolinone by Fusarium verticillioides.</title>
        <authorList>
            <person name="Glenn A.E."/>
            <person name="Meredith F.I."/>
            <person name="Morrison W.H. III"/>
            <person name="Bacon C.W."/>
        </authorList>
    </citation>
    <scope>FUNCTION</scope>
</reference>
<reference key="4">
    <citation type="journal article" date="2009" name="J. Appl. Microbiol.">
        <title>FDB2 encodes a member of the arylamine N-acetyltransferase family and is necessary for biotransformation of benzoxazolinones by Fusarium verticillioides.</title>
        <authorList>
            <person name="Glenn A.E."/>
            <person name="Bacon C.W."/>
        </authorList>
    </citation>
    <scope>FUNCTION</scope>
</reference>
<reference key="5">
    <citation type="journal article" date="2016" name="PLoS ONE">
        <title>Two horizontally transferred xenobiotic resistance gene clusters associated with detoxification of benzoxazolinones by Fusarium species.</title>
        <authorList>
            <person name="Glenn A.E."/>
            <person name="Davis C.B."/>
            <person name="Gao M."/>
            <person name="Gold S.E."/>
            <person name="Mitchell T.R."/>
            <person name="Proctor R.H."/>
            <person name="Stewart J.E."/>
            <person name="Snook M.E."/>
        </authorList>
    </citation>
    <scope>FUNCTION</scope>
    <scope>INDUCTION</scope>
    <scope>DISRUPTION PHENOTYPE</scope>
    <scope>PATHWAY</scope>
</reference>